<feature type="chain" id="PRO_1000064173" description="Glycerol-3-phosphate acyltransferase">
    <location>
        <begin position="1"/>
        <end position="203"/>
    </location>
</feature>
<feature type="transmembrane region" description="Helical" evidence="1">
    <location>
        <begin position="4"/>
        <end position="24"/>
    </location>
</feature>
<feature type="transmembrane region" description="Helical" evidence="1">
    <location>
        <begin position="56"/>
        <end position="76"/>
    </location>
</feature>
<feature type="transmembrane region" description="Helical" evidence="1">
    <location>
        <begin position="80"/>
        <end position="100"/>
    </location>
</feature>
<feature type="transmembrane region" description="Helical" evidence="1">
    <location>
        <begin position="112"/>
        <end position="132"/>
    </location>
</feature>
<feature type="transmembrane region" description="Helical" evidence="1">
    <location>
        <begin position="138"/>
        <end position="158"/>
    </location>
</feature>
<name>PLSY_ENT38</name>
<keyword id="KW-0997">Cell inner membrane</keyword>
<keyword id="KW-1003">Cell membrane</keyword>
<keyword id="KW-0444">Lipid biosynthesis</keyword>
<keyword id="KW-0443">Lipid metabolism</keyword>
<keyword id="KW-0472">Membrane</keyword>
<keyword id="KW-0594">Phospholipid biosynthesis</keyword>
<keyword id="KW-1208">Phospholipid metabolism</keyword>
<keyword id="KW-0808">Transferase</keyword>
<keyword id="KW-0812">Transmembrane</keyword>
<keyword id="KW-1133">Transmembrane helix</keyword>
<gene>
    <name evidence="1" type="primary">plsY</name>
    <name type="ordered locus">Ent638_3462</name>
</gene>
<dbReference type="EC" id="2.3.1.275" evidence="1"/>
<dbReference type="EMBL" id="CP000653">
    <property type="protein sequence ID" value="ABP62121.1"/>
    <property type="molecule type" value="Genomic_DNA"/>
</dbReference>
<dbReference type="RefSeq" id="WP_015960449.1">
    <property type="nucleotide sequence ID" value="NC_009436.1"/>
</dbReference>
<dbReference type="SMR" id="A4WEJ1"/>
<dbReference type="STRING" id="399742.Ent638_3462"/>
<dbReference type="KEGG" id="ent:Ent638_3462"/>
<dbReference type="eggNOG" id="COG0344">
    <property type="taxonomic scope" value="Bacteria"/>
</dbReference>
<dbReference type="HOGENOM" id="CLU_081254_0_2_6"/>
<dbReference type="OrthoDB" id="9777124at2"/>
<dbReference type="UniPathway" id="UPA00085"/>
<dbReference type="Proteomes" id="UP000000230">
    <property type="component" value="Chromosome"/>
</dbReference>
<dbReference type="GO" id="GO:0005886">
    <property type="term" value="C:plasma membrane"/>
    <property type="evidence" value="ECO:0007669"/>
    <property type="project" value="UniProtKB-SubCell"/>
</dbReference>
<dbReference type="GO" id="GO:0043772">
    <property type="term" value="F:acyl-phosphate glycerol-3-phosphate acyltransferase activity"/>
    <property type="evidence" value="ECO:0007669"/>
    <property type="project" value="UniProtKB-UniRule"/>
</dbReference>
<dbReference type="GO" id="GO:0008654">
    <property type="term" value="P:phospholipid biosynthetic process"/>
    <property type="evidence" value="ECO:0007669"/>
    <property type="project" value="UniProtKB-UniRule"/>
</dbReference>
<dbReference type="HAMAP" id="MF_01043">
    <property type="entry name" value="PlsY"/>
    <property type="match status" value="1"/>
</dbReference>
<dbReference type="InterPro" id="IPR003811">
    <property type="entry name" value="G3P_acylTferase_PlsY"/>
</dbReference>
<dbReference type="NCBIfam" id="TIGR00023">
    <property type="entry name" value="glycerol-3-phosphate 1-O-acyltransferase PlsY"/>
    <property type="match status" value="1"/>
</dbReference>
<dbReference type="PANTHER" id="PTHR30309:SF0">
    <property type="entry name" value="GLYCEROL-3-PHOSPHATE ACYLTRANSFERASE-RELATED"/>
    <property type="match status" value="1"/>
</dbReference>
<dbReference type="PANTHER" id="PTHR30309">
    <property type="entry name" value="INNER MEMBRANE PROTEIN YGIH"/>
    <property type="match status" value="1"/>
</dbReference>
<dbReference type="Pfam" id="PF02660">
    <property type="entry name" value="G3P_acyltransf"/>
    <property type="match status" value="1"/>
</dbReference>
<dbReference type="SMART" id="SM01207">
    <property type="entry name" value="G3P_acyltransf"/>
    <property type="match status" value="1"/>
</dbReference>
<evidence type="ECO:0000255" key="1">
    <source>
        <dbReference type="HAMAP-Rule" id="MF_01043"/>
    </source>
</evidence>
<accession>A4WEJ1</accession>
<sequence>MSAIAPGMIFLAYLCGSISSAILVCRIAGLPDPRVSGSGNPGATNVLRIGGKRAAVAVLVFDVLKGMLPVWGAYMLGVTPFWLGLIAIAACVGHIWPVFFHFKGGKGVATAFGAIAPIGWDLTGVMAGTWLLSVLLSGYSSLGAIVSALIAPFYVWWFKPQFTFPVSMLSCLILLRHHDNIQRLWRRQETKIWTKLKKKKAPK</sequence>
<proteinExistence type="inferred from homology"/>
<reference key="1">
    <citation type="journal article" date="2010" name="PLoS Genet.">
        <title>Genome sequence of the plant growth promoting endophytic bacterium Enterobacter sp. 638.</title>
        <authorList>
            <person name="Taghavi S."/>
            <person name="van der Lelie D."/>
            <person name="Hoffman A."/>
            <person name="Zhang Y.B."/>
            <person name="Walla M.D."/>
            <person name="Vangronsveld J."/>
            <person name="Newman L."/>
            <person name="Monchy S."/>
        </authorList>
    </citation>
    <scope>NUCLEOTIDE SEQUENCE [LARGE SCALE GENOMIC DNA]</scope>
    <source>
        <strain>638</strain>
    </source>
</reference>
<comment type="function">
    <text evidence="1">Catalyzes the transfer of an acyl group from acyl-phosphate (acyl-PO(4)) to glycerol-3-phosphate (G3P) to form lysophosphatidic acid (LPA). This enzyme utilizes acyl-phosphate as fatty acyl donor, but not acyl-CoA or acyl-ACP.</text>
</comment>
<comment type="catalytic activity">
    <reaction evidence="1">
        <text>an acyl phosphate + sn-glycerol 3-phosphate = a 1-acyl-sn-glycero-3-phosphate + phosphate</text>
        <dbReference type="Rhea" id="RHEA:34075"/>
        <dbReference type="ChEBI" id="CHEBI:43474"/>
        <dbReference type="ChEBI" id="CHEBI:57597"/>
        <dbReference type="ChEBI" id="CHEBI:57970"/>
        <dbReference type="ChEBI" id="CHEBI:59918"/>
        <dbReference type="EC" id="2.3.1.275"/>
    </reaction>
</comment>
<comment type="pathway">
    <text evidence="1">Lipid metabolism; phospholipid metabolism.</text>
</comment>
<comment type="subunit">
    <text evidence="1">Probably interacts with PlsX.</text>
</comment>
<comment type="subcellular location">
    <subcellularLocation>
        <location evidence="1">Cell inner membrane</location>
        <topology evidence="1">Multi-pass membrane protein</topology>
    </subcellularLocation>
</comment>
<comment type="similarity">
    <text evidence="1">Belongs to the PlsY family.</text>
</comment>
<organism>
    <name type="scientific">Enterobacter sp. (strain 638)</name>
    <dbReference type="NCBI Taxonomy" id="399742"/>
    <lineage>
        <taxon>Bacteria</taxon>
        <taxon>Pseudomonadati</taxon>
        <taxon>Pseudomonadota</taxon>
        <taxon>Gammaproteobacteria</taxon>
        <taxon>Enterobacterales</taxon>
        <taxon>Enterobacteriaceae</taxon>
        <taxon>Enterobacter</taxon>
    </lineage>
</organism>
<protein>
    <recommendedName>
        <fullName evidence="1">Glycerol-3-phosphate acyltransferase</fullName>
    </recommendedName>
    <alternativeName>
        <fullName evidence="1">Acyl-PO4 G3P acyltransferase</fullName>
    </alternativeName>
    <alternativeName>
        <fullName evidence="1">Acyl-phosphate--glycerol-3-phosphate acyltransferase</fullName>
    </alternativeName>
    <alternativeName>
        <fullName evidence="1">G3P acyltransferase</fullName>
        <shortName evidence="1">GPAT</shortName>
        <ecNumber evidence="1">2.3.1.275</ecNumber>
    </alternativeName>
    <alternativeName>
        <fullName evidence="1">Lysophosphatidic acid synthase</fullName>
        <shortName evidence="1">LPA synthase</shortName>
    </alternativeName>
</protein>